<organism>
    <name type="scientific">Staphylococcus aureus (strain COL)</name>
    <dbReference type="NCBI Taxonomy" id="93062"/>
    <lineage>
        <taxon>Bacteria</taxon>
        <taxon>Bacillati</taxon>
        <taxon>Bacillota</taxon>
        <taxon>Bacilli</taxon>
        <taxon>Bacillales</taxon>
        <taxon>Staphylococcaceae</taxon>
        <taxon>Staphylococcus</taxon>
    </lineage>
</organism>
<reference key="1">
    <citation type="journal article" date="2005" name="J. Bacteriol.">
        <title>Insights on evolution of virulence and resistance from the complete genome analysis of an early methicillin-resistant Staphylococcus aureus strain and a biofilm-producing methicillin-resistant Staphylococcus epidermidis strain.</title>
        <authorList>
            <person name="Gill S.R."/>
            <person name="Fouts D.E."/>
            <person name="Archer G.L."/>
            <person name="Mongodin E.F."/>
            <person name="DeBoy R.T."/>
            <person name="Ravel J."/>
            <person name="Paulsen I.T."/>
            <person name="Kolonay J.F."/>
            <person name="Brinkac L.M."/>
            <person name="Beanan M.J."/>
            <person name="Dodson R.J."/>
            <person name="Daugherty S.C."/>
            <person name="Madupu R."/>
            <person name="Angiuoli S.V."/>
            <person name="Durkin A.S."/>
            <person name="Haft D.H."/>
            <person name="Vamathevan J.J."/>
            <person name="Khouri H."/>
            <person name="Utterback T.R."/>
            <person name="Lee C."/>
            <person name="Dimitrov G."/>
            <person name="Jiang L."/>
            <person name="Qin H."/>
            <person name="Weidman J."/>
            <person name="Tran K."/>
            <person name="Kang K.H."/>
            <person name="Hance I.R."/>
            <person name="Nelson K.E."/>
            <person name="Fraser C.M."/>
        </authorList>
    </citation>
    <scope>NUCLEOTIDE SEQUENCE [LARGE SCALE GENOMIC DNA]</scope>
    <source>
        <strain>COL</strain>
    </source>
</reference>
<protein>
    <recommendedName>
        <fullName evidence="1">Large ribosomal subunit protein uL23</fullName>
    </recommendedName>
    <alternativeName>
        <fullName evidence="2">50S ribosomal protein L23</fullName>
    </alternativeName>
</protein>
<accession>Q5HDW0</accession>
<dbReference type="EMBL" id="CP000046">
    <property type="protein sequence ID" value="AAW37112.1"/>
    <property type="molecule type" value="Genomic_DNA"/>
</dbReference>
<dbReference type="RefSeq" id="WP_000388082.1">
    <property type="nucleotide sequence ID" value="NZ_JBGOFO010000004.1"/>
</dbReference>
<dbReference type="SMR" id="Q5HDW0"/>
<dbReference type="KEGG" id="sac:SACOL2237"/>
<dbReference type="HOGENOM" id="CLU_037562_3_2_9"/>
<dbReference type="Proteomes" id="UP000000530">
    <property type="component" value="Chromosome"/>
</dbReference>
<dbReference type="GO" id="GO:1990904">
    <property type="term" value="C:ribonucleoprotein complex"/>
    <property type="evidence" value="ECO:0007669"/>
    <property type="project" value="UniProtKB-KW"/>
</dbReference>
<dbReference type="GO" id="GO:0005840">
    <property type="term" value="C:ribosome"/>
    <property type="evidence" value="ECO:0007669"/>
    <property type="project" value="UniProtKB-KW"/>
</dbReference>
<dbReference type="GO" id="GO:0019843">
    <property type="term" value="F:rRNA binding"/>
    <property type="evidence" value="ECO:0007669"/>
    <property type="project" value="UniProtKB-UniRule"/>
</dbReference>
<dbReference type="GO" id="GO:0003735">
    <property type="term" value="F:structural constituent of ribosome"/>
    <property type="evidence" value="ECO:0007669"/>
    <property type="project" value="InterPro"/>
</dbReference>
<dbReference type="GO" id="GO:0006412">
    <property type="term" value="P:translation"/>
    <property type="evidence" value="ECO:0007669"/>
    <property type="project" value="UniProtKB-UniRule"/>
</dbReference>
<dbReference type="FunFam" id="3.30.70.330:FF:000001">
    <property type="entry name" value="50S ribosomal protein L23"/>
    <property type="match status" value="1"/>
</dbReference>
<dbReference type="Gene3D" id="3.30.70.330">
    <property type="match status" value="1"/>
</dbReference>
<dbReference type="HAMAP" id="MF_01369_B">
    <property type="entry name" value="Ribosomal_uL23_B"/>
    <property type="match status" value="1"/>
</dbReference>
<dbReference type="InterPro" id="IPR012677">
    <property type="entry name" value="Nucleotide-bd_a/b_plait_sf"/>
</dbReference>
<dbReference type="InterPro" id="IPR013025">
    <property type="entry name" value="Ribosomal_uL23-like"/>
</dbReference>
<dbReference type="InterPro" id="IPR012678">
    <property type="entry name" value="Ribosomal_uL23/eL15/eS24_sf"/>
</dbReference>
<dbReference type="NCBIfam" id="NF004363">
    <property type="entry name" value="PRK05738.2-4"/>
    <property type="match status" value="1"/>
</dbReference>
<dbReference type="PANTHER" id="PTHR11620">
    <property type="entry name" value="60S RIBOSOMAL PROTEIN L23A"/>
    <property type="match status" value="1"/>
</dbReference>
<dbReference type="Pfam" id="PF00276">
    <property type="entry name" value="Ribosomal_L23"/>
    <property type="match status" value="1"/>
</dbReference>
<dbReference type="SUPFAM" id="SSF54189">
    <property type="entry name" value="Ribosomal proteins S24e, L23 and L15e"/>
    <property type="match status" value="1"/>
</dbReference>
<proteinExistence type="inferred from homology"/>
<evidence type="ECO:0000255" key="1">
    <source>
        <dbReference type="HAMAP-Rule" id="MF_01369"/>
    </source>
</evidence>
<evidence type="ECO:0000305" key="2"/>
<feature type="chain" id="PRO_0000224170" description="Large ribosomal subunit protein uL23">
    <location>
        <begin position="1"/>
        <end position="91"/>
    </location>
</feature>
<comment type="function">
    <text evidence="1">One of the early assembly proteins it binds 23S rRNA. One of the proteins that surrounds the polypeptide exit tunnel on the outside of the ribosome. Forms the main docking site for trigger factor binding to the ribosome.</text>
</comment>
<comment type="subunit">
    <text evidence="1">Part of the 50S ribosomal subunit. Contacts protein L29, and trigger factor when it is bound to the ribosome.</text>
</comment>
<comment type="similarity">
    <text evidence="1">Belongs to the universal ribosomal protein uL23 family.</text>
</comment>
<keyword id="KW-0687">Ribonucleoprotein</keyword>
<keyword id="KW-0689">Ribosomal protein</keyword>
<keyword id="KW-0694">RNA-binding</keyword>
<keyword id="KW-0699">rRNA-binding</keyword>
<sequence>MEARDILKRPVITEKSSEAMAEDKYTFDVDTRVNKTQVKMAVEEIFNVKVASVNIMNYKPKKKRMGRYQGYTNKRRKAIVTLKEGSIDLFN</sequence>
<gene>
    <name evidence="1" type="primary">rplW</name>
    <name type="ordered locus">SACOL2237</name>
</gene>
<name>RL23_STAAC</name>